<organism>
    <name type="scientific">Thermococcus onnurineus (strain NA1)</name>
    <dbReference type="NCBI Taxonomy" id="523850"/>
    <lineage>
        <taxon>Archaea</taxon>
        <taxon>Methanobacteriati</taxon>
        <taxon>Methanobacteriota</taxon>
        <taxon>Thermococci</taxon>
        <taxon>Thermococcales</taxon>
        <taxon>Thermococcaceae</taxon>
        <taxon>Thermococcus</taxon>
    </lineage>
</organism>
<proteinExistence type="inferred from homology"/>
<gene>
    <name evidence="1" type="primary">trpS</name>
    <name type="ordered locus">TON_1666</name>
</gene>
<comment type="catalytic activity">
    <reaction evidence="1">
        <text>tRNA(Trp) + L-tryptophan + ATP = L-tryptophyl-tRNA(Trp) + AMP + diphosphate + H(+)</text>
        <dbReference type="Rhea" id="RHEA:24080"/>
        <dbReference type="Rhea" id="RHEA-COMP:9671"/>
        <dbReference type="Rhea" id="RHEA-COMP:9705"/>
        <dbReference type="ChEBI" id="CHEBI:15378"/>
        <dbReference type="ChEBI" id="CHEBI:30616"/>
        <dbReference type="ChEBI" id="CHEBI:33019"/>
        <dbReference type="ChEBI" id="CHEBI:57912"/>
        <dbReference type="ChEBI" id="CHEBI:78442"/>
        <dbReference type="ChEBI" id="CHEBI:78535"/>
        <dbReference type="ChEBI" id="CHEBI:456215"/>
        <dbReference type="EC" id="6.1.1.2"/>
    </reaction>
</comment>
<comment type="subcellular location">
    <subcellularLocation>
        <location evidence="1">Cytoplasm</location>
    </subcellularLocation>
</comment>
<comment type="similarity">
    <text evidence="1">Belongs to the class-I aminoacyl-tRNA synthetase family.</text>
</comment>
<keyword id="KW-0030">Aminoacyl-tRNA synthetase</keyword>
<keyword id="KW-0067">ATP-binding</keyword>
<keyword id="KW-0963">Cytoplasm</keyword>
<keyword id="KW-0436">Ligase</keyword>
<keyword id="KW-0547">Nucleotide-binding</keyword>
<keyword id="KW-0648">Protein biosynthesis</keyword>
<name>SYW_THEON</name>
<accession>B6YUH1</accession>
<protein>
    <recommendedName>
        <fullName evidence="1">Tryptophan--tRNA ligase</fullName>
        <ecNumber evidence="1">6.1.1.2</ecNumber>
    </recommendedName>
    <alternativeName>
        <fullName evidence="1">Tryptophanyl-tRNA synthetase</fullName>
        <shortName evidence="1">TrpRS</shortName>
    </alternativeName>
</protein>
<evidence type="ECO:0000255" key="1">
    <source>
        <dbReference type="HAMAP-Rule" id="MF_00140"/>
    </source>
</evidence>
<reference key="1">
    <citation type="journal article" date="2008" name="J. Bacteriol.">
        <title>The complete genome sequence of Thermococcus onnurineus NA1 reveals a mixed heterotrophic and carboxydotrophic metabolism.</title>
        <authorList>
            <person name="Lee H.S."/>
            <person name="Kang S.G."/>
            <person name="Bae S.S."/>
            <person name="Lim J.K."/>
            <person name="Cho Y."/>
            <person name="Kim Y.J."/>
            <person name="Jeon J.H."/>
            <person name="Cha S.-S."/>
            <person name="Kwon K.K."/>
            <person name="Kim H.-T."/>
            <person name="Park C.-J."/>
            <person name="Lee H.-W."/>
            <person name="Kim S.I."/>
            <person name="Chun J."/>
            <person name="Colwell R.R."/>
            <person name="Kim S.-J."/>
            <person name="Lee J.-H."/>
        </authorList>
    </citation>
    <scope>NUCLEOTIDE SEQUENCE [LARGE SCALE GENOMIC DNA]</scope>
    <source>
        <strain>NA1</strain>
    </source>
</reference>
<sequence length="384" mass="44884">MDEFKVTPWDVEGLVDYNKLIEEFGTSPLTDELLEKTAQLTKSELPLYFRRRFFFSHRDYDKVLQDYESGKGFFLYTGRGPSGPMHIGHIIPFFATKWLQEKFGVNLYIQITDDEKFLFKDKLTFEDTKYWAYQNILDIIAVGFDPDRTFIFQDSEFTKIYEMAIPIAKKINFSMAKAVFGFTEQSKIGMIFYPAIQAAPTFFEKKRCLIPAAIDQDPYWRLQRDFAESLGYYKTAAIHSKFVPGLMGLEGKMSASKPETAIYLTDDPEEVGRKIWKYALTGGRATAKEQREKGGEPEKCVVFKWLEIFFEEDDKKLMERYHACKNGELLCGQCKRYLIKKVQEFLKEHQKKRKEAEKKVEKFKYTGELAREQWDKAVPEALKG</sequence>
<dbReference type="EC" id="6.1.1.2" evidence="1"/>
<dbReference type="EMBL" id="CP000855">
    <property type="protein sequence ID" value="ACJ17156.1"/>
    <property type="molecule type" value="Genomic_DNA"/>
</dbReference>
<dbReference type="RefSeq" id="WP_012572628.1">
    <property type="nucleotide sequence ID" value="NC_011529.1"/>
</dbReference>
<dbReference type="SMR" id="B6YUH1"/>
<dbReference type="STRING" id="523850.TON_1666"/>
<dbReference type="GeneID" id="7017335"/>
<dbReference type="KEGG" id="ton:TON_1666"/>
<dbReference type="PATRIC" id="fig|523850.10.peg.1679"/>
<dbReference type="eggNOG" id="arCOG01887">
    <property type="taxonomic scope" value="Archaea"/>
</dbReference>
<dbReference type="HOGENOM" id="CLU_032621_0_1_2"/>
<dbReference type="OrthoDB" id="371821at2157"/>
<dbReference type="Proteomes" id="UP000002727">
    <property type="component" value="Chromosome"/>
</dbReference>
<dbReference type="GO" id="GO:0005737">
    <property type="term" value="C:cytoplasm"/>
    <property type="evidence" value="ECO:0007669"/>
    <property type="project" value="UniProtKB-SubCell"/>
</dbReference>
<dbReference type="GO" id="GO:0005524">
    <property type="term" value="F:ATP binding"/>
    <property type="evidence" value="ECO:0007669"/>
    <property type="project" value="UniProtKB-UniRule"/>
</dbReference>
<dbReference type="GO" id="GO:0004830">
    <property type="term" value="F:tryptophan-tRNA ligase activity"/>
    <property type="evidence" value="ECO:0007669"/>
    <property type="project" value="UniProtKB-UniRule"/>
</dbReference>
<dbReference type="GO" id="GO:0006436">
    <property type="term" value="P:tryptophanyl-tRNA aminoacylation"/>
    <property type="evidence" value="ECO:0007669"/>
    <property type="project" value="UniProtKB-UniRule"/>
</dbReference>
<dbReference type="CDD" id="cd00806">
    <property type="entry name" value="TrpRS_core"/>
    <property type="match status" value="1"/>
</dbReference>
<dbReference type="FunFam" id="1.10.240.10:FF:000007">
    <property type="entry name" value="Tryptophan--tRNA ligase"/>
    <property type="match status" value="1"/>
</dbReference>
<dbReference type="FunFam" id="3.40.50.620:FF:000138">
    <property type="entry name" value="Tryptophan--tRNA ligase"/>
    <property type="match status" value="1"/>
</dbReference>
<dbReference type="Gene3D" id="3.40.50.620">
    <property type="entry name" value="HUPs"/>
    <property type="match status" value="1"/>
</dbReference>
<dbReference type="Gene3D" id="1.10.240.10">
    <property type="entry name" value="Tyrosyl-Transfer RNA Synthetase"/>
    <property type="match status" value="1"/>
</dbReference>
<dbReference type="HAMAP" id="MF_00140_A">
    <property type="entry name" value="Trp_tRNA_synth_A"/>
    <property type="match status" value="1"/>
</dbReference>
<dbReference type="InterPro" id="IPR001412">
    <property type="entry name" value="aa-tRNA-synth_I_CS"/>
</dbReference>
<dbReference type="InterPro" id="IPR002305">
    <property type="entry name" value="aa-tRNA-synth_Ic"/>
</dbReference>
<dbReference type="InterPro" id="IPR014729">
    <property type="entry name" value="Rossmann-like_a/b/a_fold"/>
</dbReference>
<dbReference type="InterPro" id="IPR002306">
    <property type="entry name" value="Trp-tRNA-ligase"/>
</dbReference>
<dbReference type="InterPro" id="IPR020653">
    <property type="entry name" value="Tryptophan-tRNA-ligase_arc"/>
</dbReference>
<dbReference type="NCBIfam" id="NF008924">
    <property type="entry name" value="PRK12285.1-1"/>
    <property type="match status" value="1"/>
</dbReference>
<dbReference type="NCBIfam" id="NF008927">
    <property type="entry name" value="PRK12285.1-4"/>
    <property type="match status" value="1"/>
</dbReference>
<dbReference type="NCBIfam" id="TIGR00233">
    <property type="entry name" value="trpS"/>
    <property type="match status" value="1"/>
</dbReference>
<dbReference type="PANTHER" id="PTHR10055:SF1">
    <property type="entry name" value="TRYPTOPHAN--TRNA LIGASE, CYTOPLASMIC"/>
    <property type="match status" value="1"/>
</dbReference>
<dbReference type="PANTHER" id="PTHR10055">
    <property type="entry name" value="TRYPTOPHANYL-TRNA SYNTHETASE"/>
    <property type="match status" value="1"/>
</dbReference>
<dbReference type="Pfam" id="PF00579">
    <property type="entry name" value="tRNA-synt_1b"/>
    <property type="match status" value="1"/>
</dbReference>
<dbReference type="PRINTS" id="PR01039">
    <property type="entry name" value="TRNASYNTHTRP"/>
</dbReference>
<dbReference type="SUPFAM" id="SSF52374">
    <property type="entry name" value="Nucleotidylyl transferase"/>
    <property type="match status" value="1"/>
</dbReference>
<dbReference type="PROSITE" id="PS00178">
    <property type="entry name" value="AA_TRNA_LIGASE_I"/>
    <property type="match status" value="1"/>
</dbReference>
<feature type="chain" id="PRO_1000096114" description="Tryptophan--tRNA ligase">
    <location>
        <begin position="1"/>
        <end position="384"/>
    </location>
</feature>
<feature type="short sequence motif" description="'HIGH' region">
    <location>
        <begin position="81"/>
        <end position="89"/>
    </location>
</feature>
<feature type="short sequence motif" description="'KMSKS' region">
    <location>
        <begin position="252"/>
        <end position="256"/>
    </location>
</feature>